<name>DEOC_MYCCT</name>
<proteinExistence type="inferred from homology"/>
<evidence type="ECO:0000255" key="1">
    <source>
        <dbReference type="HAMAP-Rule" id="MF_00114"/>
    </source>
</evidence>
<organism>
    <name type="scientific">Mycoplasma capricolum subsp. capricolum (strain California kid / ATCC 27343 / NCTC 10154)</name>
    <dbReference type="NCBI Taxonomy" id="340047"/>
    <lineage>
        <taxon>Bacteria</taxon>
        <taxon>Bacillati</taxon>
        <taxon>Mycoplasmatota</taxon>
        <taxon>Mollicutes</taxon>
        <taxon>Mycoplasmataceae</taxon>
        <taxon>Mycoplasma</taxon>
    </lineage>
</organism>
<gene>
    <name evidence="1" type="primary">deoC</name>
    <name type="ordered locus">MCAP_0755</name>
</gene>
<reference key="1">
    <citation type="submission" date="2005-09" db="EMBL/GenBank/DDBJ databases">
        <authorList>
            <person name="Glass J.I."/>
            <person name="Lartigue C."/>
            <person name="Pfannkoch C."/>
            <person name="Baden-Tillson H."/>
            <person name="Smith H.O."/>
            <person name="Venter J.C."/>
            <person name="Roske K."/>
            <person name="Wise K.S."/>
            <person name="Calcutt M.J."/>
            <person name="Nelson W.C."/>
            <person name="Nierman W.C."/>
        </authorList>
    </citation>
    <scope>NUCLEOTIDE SEQUENCE [LARGE SCALE GENOMIC DNA]</scope>
    <source>
        <strain>California kid / ATCC 27343 / NCTC 10154</strain>
    </source>
</reference>
<keyword id="KW-0963">Cytoplasm</keyword>
<keyword id="KW-0456">Lyase</keyword>
<keyword id="KW-0704">Schiff base</keyword>
<protein>
    <recommendedName>
        <fullName evidence="1">Deoxyribose-phosphate aldolase</fullName>
        <shortName evidence="1">DERA</shortName>
        <ecNumber evidence="1">4.1.2.4</ecNumber>
    </recommendedName>
    <alternativeName>
        <fullName evidence="1">2-deoxy-D-ribose 5-phosphate aldolase</fullName>
    </alternativeName>
    <alternativeName>
        <fullName evidence="1">Phosphodeoxyriboaldolase</fullName>
        <shortName evidence="1">Deoxyriboaldolase</shortName>
    </alternativeName>
</protein>
<accession>Q2SRA7</accession>
<comment type="function">
    <text evidence="1">Catalyzes a reversible aldol reaction between acetaldehyde and D-glyceraldehyde 3-phosphate to generate 2-deoxy-D-ribose 5-phosphate.</text>
</comment>
<comment type="catalytic activity">
    <reaction evidence="1">
        <text>2-deoxy-D-ribose 5-phosphate = D-glyceraldehyde 3-phosphate + acetaldehyde</text>
        <dbReference type="Rhea" id="RHEA:12821"/>
        <dbReference type="ChEBI" id="CHEBI:15343"/>
        <dbReference type="ChEBI" id="CHEBI:59776"/>
        <dbReference type="ChEBI" id="CHEBI:62877"/>
        <dbReference type="EC" id="4.1.2.4"/>
    </reaction>
</comment>
<comment type="pathway">
    <text evidence="1">Carbohydrate degradation; 2-deoxy-D-ribose 1-phosphate degradation; D-glyceraldehyde 3-phosphate and acetaldehyde from 2-deoxy-alpha-D-ribose 1-phosphate: step 2/2.</text>
</comment>
<comment type="subcellular location">
    <subcellularLocation>
        <location evidence="1">Cytoplasm</location>
    </subcellularLocation>
</comment>
<comment type="similarity">
    <text evidence="1">Belongs to the DeoC/FbaB aldolase family. DeoC type 1 subfamily.</text>
</comment>
<sequence length="222" mass="24400">MEIKLNKYIDHTLLKPEATKQDIINLCNQAIQYDFATVCVNTCWTSFCKELLKNSNVGITNVVGFPLGACLTEVKVFEVKKAIENGCDEIDMVLNIGALKDKDYDLVLNDMKEVKKAANDHVVKVILENCLLTREEIIKACELAVEAGLEFVKTSTGFNKSGANIEDIKLMSKVVKNKAQVKAAGGVRTYDDAIAMINAGASRLGTSGSVEIMLKQENKSNY</sequence>
<dbReference type="EC" id="4.1.2.4" evidence="1"/>
<dbReference type="EMBL" id="CP000123">
    <property type="protein sequence ID" value="ABC01822.1"/>
    <property type="molecule type" value="Genomic_DNA"/>
</dbReference>
<dbReference type="RefSeq" id="WP_011387590.1">
    <property type="nucleotide sequence ID" value="NC_007633.1"/>
</dbReference>
<dbReference type="SMR" id="Q2SRA7"/>
<dbReference type="GeneID" id="23778291"/>
<dbReference type="KEGG" id="mcp:MCAP_0755"/>
<dbReference type="HOGENOM" id="CLU_053595_0_2_14"/>
<dbReference type="PhylomeDB" id="Q2SRA7"/>
<dbReference type="UniPathway" id="UPA00002">
    <property type="reaction ID" value="UER00468"/>
</dbReference>
<dbReference type="Proteomes" id="UP000001928">
    <property type="component" value="Chromosome"/>
</dbReference>
<dbReference type="GO" id="GO:0005737">
    <property type="term" value="C:cytoplasm"/>
    <property type="evidence" value="ECO:0007669"/>
    <property type="project" value="UniProtKB-SubCell"/>
</dbReference>
<dbReference type="GO" id="GO:0004139">
    <property type="term" value="F:deoxyribose-phosphate aldolase activity"/>
    <property type="evidence" value="ECO:0007669"/>
    <property type="project" value="UniProtKB-UniRule"/>
</dbReference>
<dbReference type="GO" id="GO:0006018">
    <property type="term" value="P:2-deoxyribose 1-phosphate catabolic process"/>
    <property type="evidence" value="ECO:0007669"/>
    <property type="project" value="UniProtKB-UniRule"/>
</dbReference>
<dbReference type="GO" id="GO:0016052">
    <property type="term" value="P:carbohydrate catabolic process"/>
    <property type="evidence" value="ECO:0007669"/>
    <property type="project" value="TreeGrafter"/>
</dbReference>
<dbReference type="GO" id="GO:0009264">
    <property type="term" value="P:deoxyribonucleotide catabolic process"/>
    <property type="evidence" value="ECO:0007669"/>
    <property type="project" value="InterPro"/>
</dbReference>
<dbReference type="CDD" id="cd00959">
    <property type="entry name" value="DeoC"/>
    <property type="match status" value="1"/>
</dbReference>
<dbReference type="FunFam" id="3.20.20.70:FF:000044">
    <property type="entry name" value="Deoxyribose-phosphate aldolase"/>
    <property type="match status" value="1"/>
</dbReference>
<dbReference type="Gene3D" id="3.20.20.70">
    <property type="entry name" value="Aldolase class I"/>
    <property type="match status" value="1"/>
</dbReference>
<dbReference type="HAMAP" id="MF_00114">
    <property type="entry name" value="DeoC_type1"/>
    <property type="match status" value="1"/>
</dbReference>
<dbReference type="InterPro" id="IPR013785">
    <property type="entry name" value="Aldolase_TIM"/>
</dbReference>
<dbReference type="InterPro" id="IPR011343">
    <property type="entry name" value="DeoC"/>
</dbReference>
<dbReference type="InterPro" id="IPR002915">
    <property type="entry name" value="DeoC/FbaB/LacD_aldolase"/>
</dbReference>
<dbReference type="InterPro" id="IPR028581">
    <property type="entry name" value="DeoC_typeI"/>
</dbReference>
<dbReference type="NCBIfam" id="TIGR00126">
    <property type="entry name" value="deoC"/>
    <property type="match status" value="1"/>
</dbReference>
<dbReference type="PANTHER" id="PTHR10889">
    <property type="entry name" value="DEOXYRIBOSE-PHOSPHATE ALDOLASE"/>
    <property type="match status" value="1"/>
</dbReference>
<dbReference type="PANTHER" id="PTHR10889:SF1">
    <property type="entry name" value="DEOXYRIBOSE-PHOSPHATE ALDOLASE"/>
    <property type="match status" value="1"/>
</dbReference>
<dbReference type="Pfam" id="PF01791">
    <property type="entry name" value="DeoC"/>
    <property type="match status" value="1"/>
</dbReference>
<dbReference type="PIRSF" id="PIRSF001357">
    <property type="entry name" value="DeoC"/>
    <property type="match status" value="1"/>
</dbReference>
<dbReference type="SMART" id="SM01133">
    <property type="entry name" value="DeoC"/>
    <property type="match status" value="1"/>
</dbReference>
<dbReference type="SUPFAM" id="SSF51569">
    <property type="entry name" value="Aldolase"/>
    <property type="match status" value="1"/>
</dbReference>
<feature type="chain" id="PRO_0000231550" description="Deoxyribose-phosphate aldolase">
    <location>
        <begin position="1"/>
        <end position="222"/>
    </location>
</feature>
<feature type="active site" description="Proton donor/acceptor" evidence="1">
    <location>
        <position position="91"/>
    </location>
</feature>
<feature type="active site" description="Schiff-base intermediate with acetaldehyde" evidence="1">
    <location>
        <position position="153"/>
    </location>
</feature>
<feature type="active site" description="Proton donor/acceptor" evidence="1">
    <location>
        <position position="182"/>
    </location>
</feature>